<gene>
    <name evidence="1" type="primary">adk</name>
    <name type="ordered locus">spr0210</name>
</gene>
<reference key="1">
    <citation type="journal article" date="2001" name="J. Bacteriol.">
        <title>Genome of the bacterium Streptococcus pneumoniae strain R6.</title>
        <authorList>
            <person name="Hoskins J."/>
            <person name="Alborn W.E. Jr."/>
            <person name="Arnold J."/>
            <person name="Blaszczak L.C."/>
            <person name="Burgett S."/>
            <person name="DeHoff B.S."/>
            <person name="Estrem S.T."/>
            <person name="Fritz L."/>
            <person name="Fu D.-J."/>
            <person name="Fuller W."/>
            <person name="Geringer C."/>
            <person name="Gilmour R."/>
            <person name="Glass J.S."/>
            <person name="Khoja H."/>
            <person name="Kraft A.R."/>
            <person name="Lagace R.E."/>
            <person name="LeBlanc D.J."/>
            <person name="Lee L.N."/>
            <person name="Lefkowitz E.J."/>
            <person name="Lu J."/>
            <person name="Matsushima P."/>
            <person name="McAhren S.M."/>
            <person name="McHenney M."/>
            <person name="McLeaster K."/>
            <person name="Mundy C.W."/>
            <person name="Nicas T.I."/>
            <person name="Norris F.H."/>
            <person name="O'Gara M."/>
            <person name="Peery R.B."/>
            <person name="Robertson G.T."/>
            <person name="Rockey P."/>
            <person name="Sun P.-M."/>
            <person name="Winkler M.E."/>
            <person name="Yang Y."/>
            <person name="Young-Bellido M."/>
            <person name="Zhao G."/>
            <person name="Zook C.A."/>
            <person name="Baltz R.H."/>
            <person name="Jaskunas S.R."/>
            <person name="Rosteck P.R. Jr."/>
            <person name="Skatrud P.L."/>
            <person name="Glass J.I."/>
        </authorList>
    </citation>
    <scope>NUCLEOTIDE SEQUENCE [LARGE SCALE GENOMIC DNA]</scope>
    <source>
        <strain>ATCC BAA-255 / R6</strain>
    </source>
</reference>
<comment type="function">
    <text evidence="1">Catalyzes the reversible transfer of the terminal phosphate group between ATP and AMP. Plays an important role in cellular energy homeostasis and in adenine nucleotide metabolism.</text>
</comment>
<comment type="catalytic activity">
    <reaction evidence="1">
        <text>AMP + ATP = 2 ADP</text>
        <dbReference type="Rhea" id="RHEA:12973"/>
        <dbReference type="ChEBI" id="CHEBI:30616"/>
        <dbReference type="ChEBI" id="CHEBI:456215"/>
        <dbReference type="ChEBI" id="CHEBI:456216"/>
        <dbReference type="EC" id="2.7.4.3"/>
    </reaction>
</comment>
<comment type="pathway">
    <text evidence="1">Purine metabolism; AMP biosynthesis via salvage pathway; AMP from ADP: step 1/1.</text>
</comment>
<comment type="subunit">
    <text evidence="1">Monomer.</text>
</comment>
<comment type="subcellular location">
    <subcellularLocation>
        <location evidence="1">Cytoplasm</location>
    </subcellularLocation>
</comment>
<comment type="domain">
    <text evidence="1">Consists of three domains, a large central CORE domain and two small peripheral domains, NMPbind and LID, which undergo movements during catalysis. The LID domain closes over the site of phosphoryl transfer upon ATP binding. Assembling and dissambling the active center during each catalytic cycle provides an effective means to prevent ATP hydrolysis.</text>
</comment>
<comment type="similarity">
    <text evidence="1">Belongs to the adenylate kinase family.</text>
</comment>
<dbReference type="EC" id="2.7.4.3" evidence="1"/>
<dbReference type="EMBL" id="AE007317">
    <property type="protein sequence ID" value="AAK99014.1"/>
    <property type="molecule type" value="Genomic_DNA"/>
</dbReference>
<dbReference type="PIR" id="B97898">
    <property type="entry name" value="B97898"/>
</dbReference>
<dbReference type="RefSeq" id="NP_357804.1">
    <property type="nucleotide sequence ID" value="NC_003098.1"/>
</dbReference>
<dbReference type="RefSeq" id="WP_001050431.1">
    <property type="nucleotide sequence ID" value="NC_003098.1"/>
</dbReference>
<dbReference type="SMR" id="Q8DRD4"/>
<dbReference type="STRING" id="171101.spr0210"/>
<dbReference type="KEGG" id="spr:spr0210"/>
<dbReference type="PATRIC" id="fig|171101.6.peg.242"/>
<dbReference type="eggNOG" id="COG0563">
    <property type="taxonomic scope" value="Bacteria"/>
</dbReference>
<dbReference type="HOGENOM" id="CLU_032354_1_2_9"/>
<dbReference type="UniPathway" id="UPA00588">
    <property type="reaction ID" value="UER00649"/>
</dbReference>
<dbReference type="Proteomes" id="UP000000586">
    <property type="component" value="Chromosome"/>
</dbReference>
<dbReference type="GO" id="GO:0005737">
    <property type="term" value="C:cytoplasm"/>
    <property type="evidence" value="ECO:0000318"/>
    <property type="project" value="GO_Central"/>
</dbReference>
<dbReference type="GO" id="GO:0005829">
    <property type="term" value="C:cytosol"/>
    <property type="evidence" value="ECO:0000318"/>
    <property type="project" value="GO_Central"/>
</dbReference>
<dbReference type="GO" id="GO:0004017">
    <property type="term" value="F:adenylate kinase activity"/>
    <property type="evidence" value="ECO:0000318"/>
    <property type="project" value="GO_Central"/>
</dbReference>
<dbReference type="GO" id="GO:0005524">
    <property type="term" value="F:ATP binding"/>
    <property type="evidence" value="ECO:0007669"/>
    <property type="project" value="UniProtKB-UniRule"/>
</dbReference>
<dbReference type="GO" id="GO:0004550">
    <property type="term" value="F:nucleoside diphosphate kinase activity"/>
    <property type="evidence" value="ECO:0000318"/>
    <property type="project" value="GO_Central"/>
</dbReference>
<dbReference type="GO" id="GO:0044209">
    <property type="term" value="P:AMP salvage"/>
    <property type="evidence" value="ECO:0007669"/>
    <property type="project" value="UniProtKB-UniRule"/>
</dbReference>
<dbReference type="GO" id="GO:0009132">
    <property type="term" value="P:nucleoside diphosphate metabolic process"/>
    <property type="evidence" value="ECO:0000318"/>
    <property type="project" value="GO_Central"/>
</dbReference>
<dbReference type="GO" id="GO:0009123">
    <property type="term" value="P:nucleoside monophosphate metabolic process"/>
    <property type="evidence" value="ECO:0000318"/>
    <property type="project" value="GO_Central"/>
</dbReference>
<dbReference type="CDD" id="cd01428">
    <property type="entry name" value="ADK"/>
    <property type="match status" value="1"/>
</dbReference>
<dbReference type="FunFam" id="3.40.50.300:FF:000106">
    <property type="entry name" value="Adenylate kinase mitochondrial"/>
    <property type="match status" value="1"/>
</dbReference>
<dbReference type="Gene3D" id="3.40.50.300">
    <property type="entry name" value="P-loop containing nucleotide triphosphate hydrolases"/>
    <property type="match status" value="1"/>
</dbReference>
<dbReference type="HAMAP" id="MF_00235">
    <property type="entry name" value="Adenylate_kinase_Adk"/>
    <property type="match status" value="1"/>
</dbReference>
<dbReference type="InterPro" id="IPR006259">
    <property type="entry name" value="Adenyl_kin_sub"/>
</dbReference>
<dbReference type="InterPro" id="IPR000850">
    <property type="entry name" value="Adenylat/UMP-CMP_kin"/>
</dbReference>
<dbReference type="InterPro" id="IPR033690">
    <property type="entry name" value="Adenylat_kinase_CS"/>
</dbReference>
<dbReference type="InterPro" id="IPR027417">
    <property type="entry name" value="P-loop_NTPase"/>
</dbReference>
<dbReference type="NCBIfam" id="TIGR01351">
    <property type="entry name" value="adk"/>
    <property type="match status" value="1"/>
</dbReference>
<dbReference type="NCBIfam" id="NF001380">
    <property type="entry name" value="PRK00279.1-2"/>
    <property type="match status" value="1"/>
</dbReference>
<dbReference type="NCBIfam" id="NF001381">
    <property type="entry name" value="PRK00279.1-3"/>
    <property type="match status" value="1"/>
</dbReference>
<dbReference type="NCBIfam" id="NF001382">
    <property type="entry name" value="PRK00279.1-4"/>
    <property type="match status" value="1"/>
</dbReference>
<dbReference type="NCBIfam" id="NF011100">
    <property type="entry name" value="PRK14527.1"/>
    <property type="match status" value="1"/>
</dbReference>
<dbReference type="PANTHER" id="PTHR23359">
    <property type="entry name" value="NUCLEOTIDE KINASE"/>
    <property type="match status" value="1"/>
</dbReference>
<dbReference type="Pfam" id="PF00406">
    <property type="entry name" value="ADK"/>
    <property type="match status" value="1"/>
</dbReference>
<dbReference type="PRINTS" id="PR00094">
    <property type="entry name" value="ADENYLTKNASE"/>
</dbReference>
<dbReference type="SUPFAM" id="SSF52540">
    <property type="entry name" value="P-loop containing nucleoside triphosphate hydrolases"/>
    <property type="match status" value="1"/>
</dbReference>
<dbReference type="PROSITE" id="PS00113">
    <property type="entry name" value="ADENYLATE_KINASE"/>
    <property type="match status" value="1"/>
</dbReference>
<sequence length="212" mass="23721">MNLLIMGLPGAGKGTQAAKIVEQFHVAHISTGDMFRAAMANQTEMGVLAKSYIDKGELVPDEVTNGIVKERLSQDDIKETGFLLDGYPRTIEQAHALDKTLAELGIELEGIINIEVNPDSLLERLSGRIIHRVTGETFHKVFNPPVDYKEEDYYQREDDKPETVKRRLDVNIAQGEPIIAHYRAKGLVHDIEGNQDINDVFSDIEKVLTNLK</sequence>
<feature type="chain" id="PRO_0000158861" description="Adenylate kinase">
    <location>
        <begin position="1"/>
        <end position="212"/>
    </location>
</feature>
<feature type="region of interest" description="NMP" evidence="1">
    <location>
        <begin position="30"/>
        <end position="59"/>
    </location>
</feature>
<feature type="region of interest" description="LID" evidence="1">
    <location>
        <begin position="127"/>
        <end position="159"/>
    </location>
</feature>
<feature type="binding site" evidence="1">
    <location>
        <begin position="10"/>
        <end position="15"/>
    </location>
    <ligand>
        <name>ATP</name>
        <dbReference type="ChEBI" id="CHEBI:30616"/>
    </ligand>
</feature>
<feature type="binding site" evidence="1">
    <location>
        <position position="31"/>
    </location>
    <ligand>
        <name>AMP</name>
        <dbReference type="ChEBI" id="CHEBI:456215"/>
    </ligand>
</feature>
<feature type="binding site" evidence="1">
    <location>
        <position position="36"/>
    </location>
    <ligand>
        <name>AMP</name>
        <dbReference type="ChEBI" id="CHEBI:456215"/>
    </ligand>
</feature>
<feature type="binding site" evidence="1">
    <location>
        <begin position="57"/>
        <end position="59"/>
    </location>
    <ligand>
        <name>AMP</name>
        <dbReference type="ChEBI" id="CHEBI:456215"/>
    </ligand>
</feature>
<feature type="binding site" evidence="1">
    <location>
        <begin position="86"/>
        <end position="89"/>
    </location>
    <ligand>
        <name>AMP</name>
        <dbReference type="ChEBI" id="CHEBI:456215"/>
    </ligand>
</feature>
<feature type="binding site" evidence="1">
    <location>
        <position position="93"/>
    </location>
    <ligand>
        <name>AMP</name>
        <dbReference type="ChEBI" id="CHEBI:456215"/>
    </ligand>
</feature>
<feature type="binding site" evidence="1">
    <location>
        <position position="128"/>
    </location>
    <ligand>
        <name>ATP</name>
        <dbReference type="ChEBI" id="CHEBI:30616"/>
    </ligand>
</feature>
<feature type="binding site" evidence="1">
    <location>
        <begin position="137"/>
        <end position="138"/>
    </location>
    <ligand>
        <name>ATP</name>
        <dbReference type="ChEBI" id="CHEBI:30616"/>
    </ligand>
</feature>
<feature type="binding site" evidence="1">
    <location>
        <position position="156"/>
    </location>
    <ligand>
        <name>AMP</name>
        <dbReference type="ChEBI" id="CHEBI:456215"/>
    </ligand>
</feature>
<feature type="binding site" evidence="1">
    <location>
        <position position="167"/>
    </location>
    <ligand>
        <name>AMP</name>
        <dbReference type="ChEBI" id="CHEBI:456215"/>
    </ligand>
</feature>
<feature type="binding site" evidence="1">
    <location>
        <position position="195"/>
    </location>
    <ligand>
        <name>ATP</name>
        <dbReference type="ChEBI" id="CHEBI:30616"/>
    </ligand>
</feature>
<organism>
    <name type="scientific">Streptococcus pneumoniae (strain ATCC BAA-255 / R6)</name>
    <dbReference type="NCBI Taxonomy" id="171101"/>
    <lineage>
        <taxon>Bacteria</taxon>
        <taxon>Bacillati</taxon>
        <taxon>Bacillota</taxon>
        <taxon>Bacilli</taxon>
        <taxon>Lactobacillales</taxon>
        <taxon>Streptococcaceae</taxon>
        <taxon>Streptococcus</taxon>
    </lineage>
</organism>
<keyword id="KW-0067">ATP-binding</keyword>
<keyword id="KW-0963">Cytoplasm</keyword>
<keyword id="KW-0418">Kinase</keyword>
<keyword id="KW-0545">Nucleotide biosynthesis</keyword>
<keyword id="KW-0547">Nucleotide-binding</keyword>
<keyword id="KW-1185">Reference proteome</keyword>
<keyword id="KW-0808">Transferase</keyword>
<accession>Q8DRD4</accession>
<protein>
    <recommendedName>
        <fullName evidence="1">Adenylate kinase</fullName>
        <shortName evidence="1">AK</shortName>
        <ecNumber evidence="1">2.7.4.3</ecNumber>
    </recommendedName>
    <alternativeName>
        <fullName evidence="1">ATP-AMP transphosphorylase</fullName>
    </alternativeName>
    <alternativeName>
        <fullName evidence="1">ATP:AMP phosphotransferase</fullName>
    </alternativeName>
    <alternativeName>
        <fullName evidence="1">Adenylate monophosphate kinase</fullName>
    </alternativeName>
</protein>
<evidence type="ECO:0000255" key="1">
    <source>
        <dbReference type="HAMAP-Rule" id="MF_00235"/>
    </source>
</evidence>
<proteinExistence type="inferred from homology"/>
<name>KAD_STRR6</name>